<protein>
    <recommendedName>
        <fullName evidence="1">Chaperonin GroEL</fullName>
        <ecNumber evidence="1">5.6.1.7</ecNumber>
    </recommendedName>
    <alternativeName>
        <fullName evidence="1">60 kDa chaperonin</fullName>
    </alternativeName>
    <alternativeName>
        <fullName evidence="1">Chaperonin-60</fullName>
        <shortName evidence="1">Cpn60</shortName>
    </alternativeName>
</protein>
<proteinExistence type="inferred from homology"/>
<comment type="function">
    <text evidence="1">Together with its co-chaperonin GroES, plays an essential role in assisting protein folding. The GroEL-GroES system forms a nano-cage that allows encapsulation of the non-native substrate proteins and provides a physical environment optimized to promote and accelerate protein folding.</text>
</comment>
<comment type="catalytic activity">
    <reaction evidence="1">
        <text>ATP + H2O + a folded polypeptide = ADP + phosphate + an unfolded polypeptide.</text>
        <dbReference type="EC" id="5.6.1.7"/>
    </reaction>
</comment>
<comment type="subunit">
    <text evidence="1">Forms a cylinder of 14 subunits composed of two heptameric rings stacked back-to-back. Interacts with the co-chaperonin GroES.</text>
</comment>
<comment type="subcellular location">
    <subcellularLocation>
        <location evidence="1">Cytoplasm</location>
    </subcellularLocation>
</comment>
<comment type="similarity">
    <text evidence="1">Belongs to the chaperonin (HSP60) family.</text>
</comment>
<reference key="1">
    <citation type="submission" date="1997-06" db="EMBL/GenBank/DDBJ databases">
        <title>Molecular Characterization of the heat-shock regulated groESL operon of Lactobacillus zeae.</title>
        <authorList>
            <person name="Murphy C.M."/>
            <person name="Chassy B.M."/>
        </authorList>
    </citation>
    <scope>NUCLEOTIDE SEQUENCE [GENOMIC DNA]</scope>
    <source>
        <strain>102S</strain>
    </source>
</reference>
<name>CH60_LACZE</name>
<feature type="chain" id="PRO_0000063403" description="Chaperonin GroEL">
    <location>
        <begin position="1"/>
        <end position="544"/>
    </location>
</feature>
<feature type="region of interest" description="Disordered" evidence="2">
    <location>
        <begin position="522"/>
        <end position="544"/>
    </location>
</feature>
<feature type="compositionally biased region" description="Low complexity" evidence="2">
    <location>
        <begin position="524"/>
        <end position="538"/>
    </location>
</feature>
<feature type="binding site" evidence="1">
    <location>
        <begin position="29"/>
        <end position="32"/>
    </location>
    <ligand>
        <name>ATP</name>
        <dbReference type="ChEBI" id="CHEBI:30616"/>
    </ligand>
</feature>
<feature type="binding site" evidence="1">
    <location>
        <begin position="86"/>
        <end position="90"/>
    </location>
    <ligand>
        <name>ATP</name>
        <dbReference type="ChEBI" id="CHEBI:30616"/>
    </ligand>
</feature>
<feature type="binding site" evidence="1">
    <location>
        <position position="413"/>
    </location>
    <ligand>
        <name>ATP</name>
        <dbReference type="ChEBI" id="CHEBI:30616"/>
    </ligand>
</feature>
<feature type="binding site" evidence="1">
    <location>
        <begin position="476"/>
        <end position="478"/>
    </location>
    <ligand>
        <name>ATP</name>
        <dbReference type="ChEBI" id="CHEBI:30616"/>
    </ligand>
</feature>
<feature type="binding site" evidence="1">
    <location>
        <position position="492"/>
    </location>
    <ligand>
        <name>ATP</name>
        <dbReference type="ChEBI" id="CHEBI:30616"/>
    </ligand>
</feature>
<dbReference type="EC" id="5.6.1.7" evidence="1"/>
<dbReference type="EMBL" id="AF010281">
    <property type="protein sequence ID" value="AAB66326.1"/>
    <property type="molecule type" value="Genomic_DNA"/>
</dbReference>
<dbReference type="SMR" id="O32847"/>
<dbReference type="GO" id="GO:0005737">
    <property type="term" value="C:cytoplasm"/>
    <property type="evidence" value="ECO:0007669"/>
    <property type="project" value="UniProtKB-SubCell"/>
</dbReference>
<dbReference type="GO" id="GO:0005524">
    <property type="term" value="F:ATP binding"/>
    <property type="evidence" value="ECO:0007669"/>
    <property type="project" value="UniProtKB-UniRule"/>
</dbReference>
<dbReference type="GO" id="GO:0140662">
    <property type="term" value="F:ATP-dependent protein folding chaperone"/>
    <property type="evidence" value="ECO:0007669"/>
    <property type="project" value="InterPro"/>
</dbReference>
<dbReference type="GO" id="GO:0016853">
    <property type="term" value="F:isomerase activity"/>
    <property type="evidence" value="ECO:0007669"/>
    <property type="project" value="UniProtKB-KW"/>
</dbReference>
<dbReference type="GO" id="GO:0051082">
    <property type="term" value="F:unfolded protein binding"/>
    <property type="evidence" value="ECO:0007669"/>
    <property type="project" value="UniProtKB-UniRule"/>
</dbReference>
<dbReference type="GO" id="GO:0042026">
    <property type="term" value="P:protein refolding"/>
    <property type="evidence" value="ECO:0007669"/>
    <property type="project" value="UniProtKB-UniRule"/>
</dbReference>
<dbReference type="CDD" id="cd03344">
    <property type="entry name" value="GroEL"/>
    <property type="match status" value="1"/>
</dbReference>
<dbReference type="FunFam" id="1.10.560.10:FF:000001">
    <property type="entry name" value="60 kDa chaperonin"/>
    <property type="match status" value="1"/>
</dbReference>
<dbReference type="FunFam" id="3.50.7.10:FF:000001">
    <property type="entry name" value="60 kDa chaperonin"/>
    <property type="match status" value="1"/>
</dbReference>
<dbReference type="Gene3D" id="3.50.7.10">
    <property type="entry name" value="GroEL"/>
    <property type="match status" value="1"/>
</dbReference>
<dbReference type="Gene3D" id="1.10.560.10">
    <property type="entry name" value="GroEL-like equatorial domain"/>
    <property type="match status" value="1"/>
</dbReference>
<dbReference type="Gene3D" id="3.30.260.10">
    <property type="entry name" value="TCP-1-like chaperonin intermediate domain"/>
    <property type="match status" value="1"/>
</dbReference>
<dbReference type="HAMAP" id="MF_00600">
    <property type="entry name" value="CH60"/>
    <property type="match status" value="1"/>
</dbReference>
<dbReference type="InterPro" id="IPR018370">
    <property type="entry name" value="Chaperonin_Cpn60_CS"/>
</dbReference>
<dbReference type="InterPro" id="IPR001844">
    <property type="entry name" value="Cpn60/GroEL"/>
</dbReference>
<dbReference type="InterPro" id="IPR002423">
    <property type="entry name" value="Cpn60/GroEL/TCP-1"/>
</dbReference>
<dbReference type="InterPro" id="IPR027409">
    <property type="entry name" value="GroEL-like_apical_dom_sf"/>
</dbReference>
<dbReference type="InterPro" id="IPR027413">
    <property type="entry name" value="GROEL-like_equatorial_sf"/>
</dbReference>
<dbReference type="InterPro" id="IPR027410">
    <property type="entry name" value="TCP-1-like_intermed_sf"/>
</dbReference>
<dbReference type="NCBIfam" id="TIGR02348">
    <property type="entry name" value="GroEL"/>
    <property type="match status" value="1"/>
</dbReference>
<dbReference type="NCBIfam" id="NF000592">
    <property type="entry name" value="PRK00013.1"/>
    <property type="match status" value="1"/>
</dbReference>
<dbReference type="NCBIfam" id="NF009487">
    <property type="entry name" value="PRK12849.1"/>
    <property type="match status" value="1"/>
</dbReference>
<dbReference type="NCBIfam" id="NF009488">
    <property type="entry name" value="PRK12850.1"/>
    <property type="match status" value="1"/>
</dbReference>
<dbReference type="NCBIfam" id="NF009489">
    <property type="entry name" value="PRK12851.1"/>
    <property type="match status" value="1"/>
</dbReference>
<dbReference type="PANTHER" id="PTHR45633">
    <property type="entry name" value="60 KDA HEAT SHOCK PROTEIN, MITOCHONDRIAL"/>
    <property type="match status" value="1"/>
</dbReference>
<dbReference type="Pfam" id="PF00118">
    <property type="entry name" value="Cpn60_TCP1"/>
    <property type="match status" value="1"/>
</dbReference>
<dbReference type="PRINTS" id="PR00298">
    <property type="entry name" value="CHAPERONIN60"/>
</dbReference>
<dbReference type="SUPFAM" id="SSF52029">
    <property type="entry name" value="GroEL apical domain-like"/>
    <property type="match status" value="1"/>
</dbReference>
<dbReference type="SUPFAM" id="SSF48592">
    <property type="entry name" value="GroEL equatorial domain-like"/>
    <property type="match status" value="2"/>
</dbReference>
<dbReference type="PROSITE" id="PS00296">
    <property type="entry name" value="CHAPERONINS_CPN60"/>
    <property type="match status" value="1"/>
</dbReference>
<gene>
    <name evidence="1" type="primary">groEL</name>
    <name evidence="1" type="synonym">groL</name>
</gene>
<organism>
    <name type="scientific">Lacticaseibacillus zeae</name>
    <name type="common">Lactobacillus zeae</name>
    <dbReference type="NCBI Taxonomy" id="57037"/>
    <lineage>
        <taxon>Bacteria</taxon>
        <taxon>Bacillati</taxon>
        <taxon>Bacillota</taxon>
        <taxon>Bacilli</taxon>
        <taxon>Lactobacillales</taxon>
        <taxon>Lactobacillaceae</taxon>
        <taxon>Lacticaseibacillus</taxon>
    </lineage>
</organism>
<keyword id="KW-0067">ATP-binding</keyword>
<keyword id="KW-0143">Chaperone</keyword>
<keyword id="KW-0963">Cytoplasm</keyword>
<keyword id="KW-0413">Isomerase</keyword>
<keyword id="KW-0547">Nucleotide-binding</keyword>
<sequence>MAKEIKFSEDARAAMLRGVDQLANTVKTTLGPKGRNVVLDKSYGSPEITNDGVTIAKSIDLEDHYENMGAKLVAEVASKTNDIAGDGTTTATVLAQSIIREGMKNVTAGANPVGIRTGIEKATKAAVDELHKISHKVNGKKEIAQVASVSSSNTEVGSLIADAMEKVGHDGVITIEESKGIDTELSVVEGMQFDRGYLSQYMVTDNDKMEADLDDPYILITDKKISNIQDILPLLQEIVQQGKALLIIADDVAGEALPTLVLNKIRGTFNVVAVKAPGFGDRRKAQLEDIATLTGGTVISSDLGLDLKDTKLEQLGRAGKVTVTKDNTTIVDGAGSKDAIAERVNIIKKQIDDTTSDFDREKLQERLAKLAGGVAVVKVGAATETELKERKYRIEDALNATRAAVEEGYVAGGGTALVDVLPAVAALKEEGDVQTGINIVLRALEEPVRQIAENAGKEGSVIVEQLKKEKQGVGYNAATDEWEDMAKSGIIDPTKVTRSALQNAASVAALMLTTEAVVADKPDPNANNNAAAGANPAAGMGGMM</sequence>
<accession>O32847</accession>
<evidence type="ECO:0000255" key="1">
    <source>
        <dbReference type="HAMAP-Rule" id="MF_00600"/>
    </source>
</evidence>
<evidence type="ECO:0000256" key="2">
    <source>
        <dbReference type="SAM" id="MobiDB-lite"/>
    </source>
</evidence>